<organism>
    <name type="scientific">Salmonella paratyphi A (strain AKU_12601)</name>
    <dbReference type="NCBI Taxonomy" id="554290"/>
    <lineage>
        <taxon>Bacteria</taxon>
        <taxon>Pseudomonadati</taxon>
        <taxon>Pseudomonadota</taxon>
        <taxon>Gammaproteobacteria</taxon>
        <taxon>Enterobacterales</taxon>
        <taxon>Enterobacteriaceae</taxon>
        <taxon>Salmonella</taxon>
    </lineage>
</organism>
<protein>
    <recommendedName>
        <fullName evidence="1">Protein YcgL</fullName>
    </recommendedName>
</protein>
<name>YCGL_SALPK</name>
<proteinExistence type="inferred from homology"/>
<dbReference type="EMBL" id="FM200053">
    <property type="protein sequence ID" value="CAR59141.1"/>
    <property type="molecule type" value="Genomic_DNA"/>
</dbReference>
<dbReference type="SMR" id="B5BHE3"/>
<dbReference type="KEGG" id="sek:SSPA0990"/>
<dbReference type="HOGENOM" id="CLU_155118_1_0_6"/>
<dbReference type="Proteomes" id="UP000001869">
    <property type="component" value="Chromosome"/>
</dbReference>
<dbReference type="Gene3D" id="3.10.510.20">
    <property type="entry name" value="YcgL domain"/>
    <property type="match status" value="1"/>
</dbReference>
<dbReference type="HAMAP" id="MF_01866">
    <property type="entry name" value="UPF0745"/>
    <property type="match status" value="1"/>
</dbReference>
<dbReference type="InterPro" id="IPR038068">
    <property type="entry name" value="YcgL-like_sf"/>
</dbReference>
<dbReference type="InterPro" id="IPR027354">
    <property type="entry name" value="YcgL_dom"/>
</dbReference>
<dbReference type="PANTHER" id="PTHR38109">
    <property type="entry name" value="PROTEIN YCGL"/>
    <property type="match status" value="1"/>
</dbReference>
<dbReference type="PANTHER" id="PTHR38109:SF1">
    <property type="entry name" value="PROTEIN YCGL"/>
    <property type="match status" value="1"/>
</dbReference>
<dbReference type="Pfam" id="PF05166">
    <property type="entry name" value="YcgL"/>
    <property type="match status" value="1"/>
</dbReference>
<dbReference type="SUPFAM" id="SSF160191">
    <property type="entry name" value="YcgL-like"/>
    <property type="match status" value="1"/>
</dbReference>
<dbReference type="PROSITE" id="PS51648">
    <property type="entry name" value="YCGL"/>
    <property type="match status" value="1"/>
</dbReference>
<evidence type="ECO:0000255" key="1">
    <source>
        <dbReference type="HAMAP-Rule" id="MF_01866"/>
    </source>
</evidence>
<evidence type="ECO:0000256" key="2">
    <source>
        <dbReference type="SAM" id="MobiDB-lite"/>
    </source>
</evidence>
<accession>B5BHE3</accession>
<reference key="1">
    <citation type="journal article" date="2009" name="BMC Genomics">
        <title>Pseudogene accumulation in the evolutionary histories of Salmonella enterica serovars Paratyphi A and Typhi.</title>
        <authorList>
            <person name="Holt K.E."/>
            <person name="Thomson N.R."/>
            <person name="Wain J."/>
            <person name="Langridge G.C."/>
            <person name="Hasan R."/>
            <person name="Bhutta Z.A."/>
            <person name="Quail M.A."/>
            <person name="Norbertczak H."/>
            <person name="Walker D."/>
            <person name="Simmonds M."/>
            <person name="White B."/>
            <person name="Bason N."/>
            <person name="Mungall K."/>
            <person name="Dougan G."/>
            <person name="Parkhill J."/>
        </authorList>
    </citation>
    <scope>NUCLEOTIDE SEQUENCE [LARGE SCALE GENOMIC DNA]</scope>
    <source>
        <strain>AKU_12601</strain>
    </source>
</reference>
<sequence>MRQVTIPLIQSKSMFCVIYRSSKRDQTYLYVEKKDDFSQVPEALMKGFGQPQLAMMLPLDGRKKLVNAELEKVKQALSEQGYYLQLPPPPEDLLKQHLSSVGQNTSPADR</sequence>
<gene>
    <name evidence="1" type="primary">ycgL</name>
    <name type="ordered locus">SSPA0990</name>
</gene>
<feature type="chain" id="PRO_0000375357" description="Protein YcgL">
    <location>
        <begin position="1"/>
        <end position="110"/>
    </location>
</feature>
<feature type="domain" description="YcgL" evidence="1">
    <location>
        <begin position="14"/>
        <end position="98"/>
    </location>
</feature>
<feature type="region of interest" description="Disordered" evidence="2">
    <location>
        <begin position="88"/>
        <end position="110"/>
    </location>
</feature>
<feature type="compositionally biased region" description="Polar residues" evidence="2">
    <location>
        <begin position="97"/>
        <end position="110"/>
    </location>
</feature>